<feature type="chain" id="PRO_1000119331" description="Potassium-transporting ATPase potassium-binding subunit">
    <location>
        <begin position="1"/>
        <end position="555"/>
    </location>
</feature>
<feature type="transmembrane region" description="Helical" evidence="1">
    <location>
        <begin position="2"/>
        <end position="22"/>
    </location>
</feature>
<feature type="transmembrane region" description="Helical" evidence="1">
    <location>
        <begin position="60"/>
        <end position="80"/>
    </location>
</feature>
<feature type="transmembrane region" description="Helical" evidence="1">
    <location>
        <begin position="130"/>
        <end position="150"/>
    </location>
</feature>
<feature type="transmembrane region" description="Helical" evidence="1">
    <location>
        <begin position="173"/>
        <end position="193"/>
    </location>
</feature>
<feature type="transmembrane region" description="Helical" evidence="1">
    <location>
        <begin position="246"/>
        <end position="266"/>
    </location>
</feature>
<feature type="transmembrane region" description="Helical" evidence="1">
    <location>
        <begin position="278"/>
        <end position="298"/>
    </location>
</feature>
<feature type="transmembrane region" description="Helical" evidence="1">
    <location>
        <begin position="374"/>
        <end position="394"/>
    </location>
</feature>
<feature type="transmembrane region" description="Helical" evidence="1">
    <location>
        <begin position="412"/>
        <end position="432"/>
    </location>
</feature>
<feature type="transmembrane region" description="Helical" evidence="1">
    <location>
        <begin position="483"/>
        <end position="503"/>
    </location>
</feature>
<feature type="transmembrane region" description="Helical" evidence="1">
    <location>
        <begin position="525"/>
        <end position="545"/>
    </location>
</feature>
<organism>
    <name type="scientific">Bacillus cereus (strain G9842)</name>
    <dbReference type="NCBI Taxonomy" id="405531"/>
    <lineage>
        <taxon>Bacteria</taxon>
        <taxon>Bacillati</taxon>
        <taxon>Bacillota</taxon>
        <taxon>Bacilli</taxon>
        <taxon>Bacillales</taxon>
        <taxon>Bacillaceae</taxon>
        <taxon>Bacillus</taxon>
        <taxon>Bacillus cereus group</taxon>
    </lineage>
</organism>
<accession>B7II08</accession>
<comment type="function">
    <text evidence="1">Part of the high-affinity ATP-driven potassium transport (or Kdp) system, which catalyzes the hydrolysis of ATP coupled with the electrogenic transport of potassium into the cytoplasm. This subunit binds the extracellular potassium ions and delivers the ions to the membrane domain of KdpB through an intramembrane tunnel.</text>
</comment>
<comment type="subunit">
    <text evidence="1">The system is composed of three essential subunits: KdpA, KdpB and KdpC.</text>
</comment>
<comment type="subcellular location">
    <subcellularLocation>
        <location evidence="1">Cell membrane</location>
        <topology evidence="1">Multi-pass membrane protein</topology>
    </subcellularLocation>
</comment>
<comment type="similarity">
    <text evidence="1">Belongs to the KdpA family.</text>
</comment>
<proteinExistence type="inferred from homology"/>
<protein>
    <recommendedName>
        <fullName evidence="1">Potassium-transporting ATPase potassium-binding subunit</fullName>
    </recommendedName>
    <alternativeName>
        <fullName evidence="1">ATP phosphohydrolase [potassium-transporting] A chain</fullName>
    </alternativeName>
    <alternativeName>
        <fullName evidence="1">Potassium-binding and translocating subunit A</fullName>
    </alternativeName>
    <alternativeName>
        <fullName evidence="1">Potassium-translocating ATPase A chain</fullName>
    </alternativeName>
</protein>
<keyword id="KW-1003">Cell membrane</keyword>
<keyword id="KW-0406">Ion transport</keyword>
<keyword id="KW-0472">Membrane</keyword>
<keyword id="KW-0630">Potassium</keyword>
<keyword id="KW-0633">Potassium transport</keyword>
<keyword id="KW-0812">Transmembrane</keyword>
<keyword id="KW-1133">Transmembrane helix</keyword>
<keyword id="KW-0813">Transport</keyword>
<gene>
    <name evidence="1" type="primary">kdpA</name>
    <name type="ordered locus">BCG9842_B4534</name>
</gene>
<evidence type="ECO:0000255" key="1">
    <source>
        <dbReference type="HAMAP-Rule" id="MF_00275"/>
    </source>
</evidence>
<reference key="1">
    <citation type="submission" date="2008-10" db="EMBL/GenBank/DDBJ databases">
        <title>Genome sequence of Bacillus cereus G9842.</title>
        <authorList>
            <person name="Dodson R.J."/>
            <person name="Durkin A.S."/>
            <person name="Rosovitz M.J."/>
            <person name="Rasko D.A."/>
            <person name="Hoffmaster A."/>
            <person name="Ravel J."/>
            <person name="Sutton G."/>
        </authorList>
    </citation>
    <scope>NUCLEOTIDE SEQUENCE [LARGE SCALE GENOMIC DNA]</scope>
    <source>
        <strain>G9842</strain>
    </source>
</reference>
<sequence length="555" mass="59730">MIWVAVIITMLLFILVAKPTGIYLEKAFQGSKTLDKVFGPFEKLIFKITGVKAYNQTWKQYALSLVLLNGFMIVVVYFIFRLQGVLPLNPAHIEGMEPTLAFNTAISFMADTNLQHYSGENGLSYLSQLIGITFLMFAAPATTLALVMAFIRGLAGKELGNFFVDFTRALTRVFLPIAFIAALVFVALGVPQTLDGAVTAQTIEGAKQSILRGPVASFVSIKELGNNGGGFFGANSTHPFENPGQMSNILQMMLMMLLPTALPFTYGRMVGNKKQGRILFVSLFMVFLLGFITITTSELNGNPALNGMGIEHVQGSTEGKEVRFGTVFSSLYATVTTAAETGAVNTMHDTLTPIGGLVPLVNMMLNTVYGGVGAGFVNIIMYAIIAVFISGLMVGRTPEFLGKKIEGKEMKLIAVTILFHPLLILGFSALALSTNLGTDAISHSGFHGLTQVVYEYTSSAANNGSGFEGLGDNTPFWNITTGLVMFLGRYFSLITMLAVAASLKEKTVVPETVGTFRTDNSLFGGIFIGTIVIVGALTFFPMLVLGPIAEFLTLK</sequence>
<dbReference type="EMBL" id="CP001186">
    <property type="protein sequence ID" value="ACK96291.1"/>
    <property type="molecule type" value="Genomic_DNA"/>
</dbReference>
<dbReference type="RefSeq" id="WP_000638330.1">
    <property type="nucleotide sequence ID" value="NC_011772.1"/>
</dbReference>
<dbReference type="SMR" id="B7II08"/>
<dbReference type="KEGG" id="bcg:BCG9842_B4534"/>
<dbReference type="HOGENOM" id="CLU_018614_3_0_9"/>
<dbReference type="Proteomes" id="UP000006744">
    <property type="component" value="Chromosome"/>
</dbReference>
<dbReference type="GO" id="GO:0005886">
    <property type="term" value="C:plasma membrane"/>
    <property type="evidence" value="ECO:0007669"/>
    <property type="project" value="UniProtKB-SubCell"/>
</dbReference>
<dbReference type="GO" id="GO:0008556">
    <property type="term" value="F:P-type potassium transmembrane transporter activity"/>
    <property type="evidence" value="ECO:0007669"/>
    <property type="project" value="InterPro"/>
</dbReference>
<dbReference type="GO" id="GO:0030955">
    <property type="term" value="F:potassium ion binding"/>
    <property type="evidence" value="ECO:0007669"/>
    <property type="project" value="UniProtKB-UniRule"/>
</dbReference>
<dbReference type="HAMAP" id="MF_00275">
    <property type="entry name" value="KdpA"/>
    <property type="match status" value="1"/>
</dbReference>
<dbReference type="InterPro" id="IPR004623">
    <property type="entry name" value="KdpA"/>
</dbReference>
<dbReference type="NCBIfam" id="TIGR00680">
    <property type="entry name" value="kdpA"/>
    <property type="match status" value="1"/>
</dbReference>
<dbReference type="PANTHER" id="PTHR30607">
    <property type="entry name" value="POTASSIUM-TRANSPORTING ATPASE A CHAIN"/>
    <property type="match status" value="1"/>
</dbReference>
<dbReference type="PANTHER" id="PTHR30607:SF2">
    <property type="entry name" value="POTASSIUM-TRANSPORTING ATPASE POTASSIUM-BINDING SUBUNIT"/>
    <property type="match status" value="1"/>
</dbReference>
<dbReference type="Pfam" id="PF03814">
    <property type="entry name" value="KdpA"/>
    <property type="match status" value="1"/>
</dbReference>
<dbReference type="PIRSF" id="PIRSF001294">
    <property type="entry name" value="K_ATPaseA"/>
    <property type="match status" value="1"/>
</dbReference>
<name>KDPA_BACC2</name>